<protein>
    <recommendedName>
        <fullName evidence="1">Enolase</fullName>
        <ecNumber evidence="1">4.2.1.11</ecNumber>
    </recommendedName>
    <alternativeName>
        <fullName evidence="1">2-phospho-D-glycerate hydro-lyase</fullName>
    </alternativeName>
    <alternativeName>
        <fullName evidence="1">2-phosphoglycerate dehydratase</fullName>
    </alternativeName>
</protein>
<name>ENO_ALKEH</name>
<proteinExistence type="inferred from homology"/>
<dbReference type="EC" id="4.2.1.11" evidence="1"/>
<dbReference type="EMBL" id="CP000453">
    <property type="protein sequence ID" value="ABI57183.1"/>
    <property type="molecule type" value="Genomic_DNA"/>
</dbReference>
<dbReference type="RefSeq" id="WP_011629577.1">
    <property type="nucleotide sequence ID" value="NC_008340.1"/>
</dbReference>
<dbReference type="SMR" id="Q0A7K4"/>
<dbReference type="KEGG" id="aeh:Mlg_1839"/>
<dbReference type="eggNOG" id="COG0148">
    <property type="taxonomic scope" value="Bacteria"/>
</dbReference>
<dbReference type="HOGENOM" id="CLU_031223_2_1_6"/>
<dbReference type="OrthoDB" id="9804716at2"/>
<dbReference type="UniPathway" id="UPA00109">
    <property type="reaction ID" value="UER00187"/>
</dbReference>
<dbReference type="Proteomes" id="UP000001962">
    <property type="component" value="Chromosome"/>
</dbReference>
<dbReference type="GO" id="GO:0009986">
    <property type="term" value="C:cell surface"/>
    <property type="evidence" value="ECO:0007669"/>
    <property type="project" value="UniProtKB-SubCell"/>
</dbReference>
<dbReference type="GO" id="GO:0005576">
    <property type="term" value="C:extracellular region"/>
    <property type="evidence" value="ECO:0007669"/>
    <property type="project" value="UniProtKB-SubCell"/>
</dbReference>
<dbReference type="GO" id="GO:0000015">
    <property type="term" value="C:phosphopyruvate hydratase complex"/>
    <property type="evidence" value="ECO:0007669"/>
    <property type="project" value="InterPro"/>
</dbReference>
<dbReference type="GO" id="GO:0000287">
    <property type="term" value="F:magnesium ion binding"/>
    <property type="evidence" value="ECO:0007669"/>
    <property type="project" value="UniProtKB-UniRule"/>
</dbReference>
<dbReference type="GO" id="GO:0004634">
    <property type="term" value="F:phosphopyruvate hydratase activity"/>
    <property type="evidence" value="ECO:0007669"/>
    <property type="project" value="UniProtKB-UniRule"/>
</dbReference>
<dbReference type="GO" id="GO:0006096">
    <property type="term" value="P:glycolytic process"/>
    <property type="evidence" value="ECO:0007669"/>
    <property type="project" value="UniProtKB-UniRule"/>
</dbReference>
<dbReference type="CDD" id="cd03313">
    <property type="entry name" value="enolase"/>
    <property type="match status" value="1"/>
</dbReference>
<dbReference type="FunFam" id="3.20.20.120:FF:000001">
    <property type="entry name" value="Enolase"/>
    <property type="match status" value="1"/>
</dbReference>
<dbReference type="FunFam" id="3.30.390.10:FF:000001">
    <property type="entry name" value="Enolase"/>
    <property type="match status" value="1"/>
</dbReference>
<dbReference type="Gene3D" id="3.20.20.120">
    <property type="entry name" value="Enolase-like C-terminal domain"/>
    <property type="match status" value="1"/>
</dbReference>
<dbReference type="Gene3D" id="3.30.390.10">
    <property type="entry name" value="Enolase-like, N-terminal domain"/>
    <property type="match status" value="1"/>
</dbReference>
<dbReference type="HAMAP" id="MF_00318">
    <property type="entry name" value="Enolase"/>
    <property type="match status" value="1"/>
</dbReference>
<dbReference type="InterPro" id="IPR000941">
    <property type="entry name" value="Enolase"/>
</dbReference>
<dbReference type="InterPro" id="IPR036849">
    <property type="entry name" value="Enolase-like_C_sf"/>
</dbReference>
<dbReference type="InterPro" id="IPR029017">
    <property type="entry name" value="Enolase-like_N"/>
</dbReference>
<dbReference type="InterPro" id="IPR020810">
    <property type="entry name" value="Enolase_C"/>
</dbReference>
<dbReference type="InterPro" id="IPR020809">
    <property type="entry name" value="Enolase_CS"/>
</dbReference>
<dbReference type="InterPro" id="IPR020811">
    <property type="entry name" value="Enolase_N"/>
</dbReference>
<dbReference type="NCBIfam" id="TIGR01060">
    <property type="entry name" value="eno"/>
    <property type="match status" value="1"/>
</dbReference>
<dbReference type="PANTHER" id="PTHR11902">
    <property type="entry name" value="ENOLASE"/>
    <property type="match status" value="1"/>
</dbReference>
<dbReference type="PANTHER" id="PTHR11902:SF1">
    <property type="entry name" value="ENOLASE"/>
    <property type="match status" value="1"/>
</dbReference>
<dbReference type="Pfam" id="PF00113">
    <property type="entry name" value="Enolase_C"/>
    <property type="match status" value="1"/>
</dbReference>
<dbReference type="Pfam" id="PF03952">
    <property type="entry name" value="Enolase_N"/>
    <property type="match status" value="1"/>
</dbReference>
<dbReference type="PIRSF" id="PIRSF001400">
    <property type="entry name" value="Enolase"/>
    <property type="match status" value="1"/>
</dbReference>
<dbReference type="PRINTS" id="PR00148">
    <property type="entry name" value="ENOLASE"/>
</dbReference>
<dbReference type="SFLD" id="SFLDS00001">
    <property type="entry name" value="Enolase"/>
    <property type="match status" value="1"/>
</dbReference>
<dbReference type="SFLD" id="SFLDF00002">
    <property type="entry name" value="enolase"/>
    <property type="match status" value="1"/>
</dbReference>
<dbReference type="SMART" id="SM01192">
    <property type="entry name" value="Enolase_C"/>
    <property type="match status" value="1"/>
</dbReference>
<dbReference type="SMART" id="SM01193">
    <property type="entry name" value="Enolase_N"/>
    <property type="match status" value="1"/>
</dbReference>
<dbReference type="SUPFAM" id="SSF51604">
    <property type="entry name" value="Enolase C-terminal domain-like"/>
    <property type="match status" value="1"/>
</dbReference>
<dbReference type="SUPFAM" id="SSF54826">
    <property type="entry name" value="Enolase N-terminal domain-like"/>
    <property type="match status" value="1"/>
</dbReference>
<dbReference type="PROSITE" id="PS00164">
    <property type="entry name" value="ENOLASE"/>
    <property type="match status" value="1"/>
</dbReference>
<keyword id="KW-0963">Cytoplasm</keyword>
<keyword id="KW-0324">Glycolysis</keyword>
<keyword id="KW-0456">Lyase</keyword>
<keyword id="KW-0460">Magnesium</keyword>
<keyword id="KW-0479">Metal-binding</keyword>
<keyword id="KW-1185">Reference proteome</keyword>
<keyword id="KW-0964">Secreted</keyword>
<organism>
    <name type="scientific">Alkalilimnicola ehrlichii (strain ATCC BAA-1101 / DSM 17681 / MLHE-1)</name>
    <dbReference type="NCBI Taxonomy" id="187272"/>
    <lineage>
        <taxon>Bacteria</taxon>
        <taxon>Pseudomonadati</taxon>
        <taxon>Pseudomonadota</taxon>
        <taxon>Gammaproteobacteria</taxon>
        <taxon>Chromatiales</taxon>
        <taxon>Ectothiorhodospiraceae</taxon>
        <taxon>Alkalilimnicola</taxon>
    </lineage>
</organism>
<sequence length="429" mass="46083">MGTIKQIKAREILDSRGNPTVEADVILDSGVMGRAAVPSGASTGTREAVELRDGDAGRYLGKGVRKAVENVNTVIADALCGMDASGQRALDDRMRELDGTDNKGKLGANALLAVSLAAARATAAERGQSLFRYLNPEGPWSLPVPMMNILNGGEHADNSVDIQEFMVMPTGFDRFSEALRCGTEIFHALKKVLQDRGLNTGVGDEGGFAPDLPSNEAALEVILEAIDRAGYKAGENVWLALDAASSEFYQDGVYRLASEGREFSAEAFADYLADLCARYPILSIEDGMDESDWVGWKALTDKLGDRVQLVGDDLFVTNTRILKRGIDEGVGNSILIKFNQIGTLSETLDAIAMAHEAGFTSVVSHRSGETEDTTIADLAVATTATQIKTGSLSRSDRVAKYNQLLRIEEELGEQADYPGLAAFPQLRRG</sequence>
<reference key="1">
    <citation type="submission" date="2006-08" db="EMBL/GenBank/DDBJ databases">
        <title>Complete sequence of Alkalilimnicola ehrilichei MLHE-1.</title>
        <authorList>
            <person name="Copeland A."/>
            <person name="Lucas S."/>
            <person name="Lapidus A."/>
            <person name="Barry K."/>
            <person name="Detter J.C."/>
            <person name="Glavina del Rio T."/>
            <person name="Hammon N."/>
            <person name="Israni S."/>
            <person name="Dalin E."/>
            <person name="Tice H."/>
            <person name="Pitluck S."/>
            <person name="Sims D."/>
            <person name="Brettin T."/>
            <person name="Bruce D."/>
            <person name="Han C."/>
            <person name="Tapia R."/>
            <person name="Gilna P."/>
            <person name="Schmutz J."/>
            <person name="Larimer F."/>
            <person name="Land M."/>
            <person name="Hauser L."/>
            <person name="Kyrpides N."/>
            <person name="Mikhailova N."/>
            <person name="Oremland R.S."/>
            <person name="Hoeft S.E."/>
            <person name="Switzer-Blum J."/>
            <person name="Kulp T."/>
            <person name="King G."/>
            <person name="Tabita R."/>
            <person name="Witte B."/>
            <person name="Santini J.M."/>
            <person name="Basu P."/>
            <person name="Hollibaugh J.T."/>
            <person name="Xie G."/>
            <person name="Stolz J.F."/>
            <person name="Richardson P."/>
        </authorList>
    </citation>
    <scope>NUCLEOTIDE SEQUENCE [LARGE SCALE GENOMIC DNA]</scope>
    <source>
        <strain>ATCC BAA-1101 / DSM 17681 / MLHE-1</strain>
    </source>
</reference>
<evidence type="ECO:0000255" key="1">
    <source>
        <dbReference type="HAMAP-Rule" id="MF_00318"/>
    </source>
</evidence>
<feature type="chain" id="PRO_0000266993" description="Enolase">
    <location>
        <begin position="1"/>
        <end position="429"/>
    </location>
</feature>
<feature type="active site" description="Proton donor" evidence="1">
    <location>
        <position position="205"/>
    </location>
</feature>
<feature type="active site" description="Proton acceptor" evidence="1">
    <location>
        <position position="337"/>
    </location>
</feature>
<feature type="binding site" evidence="1">
    <location>
        <position position="163"/>
    </location>
    <ligand>
        <name>(2R)-2-phosphoglycerate</name>
        <dbReference type="ChEBI" id="CHEBI:58289"/>
    </ligand>
</feature>
<feature type="binding site" evidence="1">
    <location>
        <position position="242"/>
    </location>
    <ligand>
        <name>Mg(2+)</name>
        <dbReference type="ChEBI" id="CHEBI:18420"/>
    </ligand>
</feature>
<feature type="binding site" evidence="1">
    <location>
        <position position="285"/>
    </location>
    <ligand>
        <name>Mg(2+)</name>
        <dbReference type="ChEBI" id="CHEBI:18420"/>
    </ligand>
</feature>
<feature type="binding site" evidence="1">
    <location>
        <position position="312"/>
    </location>
    <ligand>
        <name>Mg(2+)</name>
        <dbReference type="ChEBI" id="CHEBI:18420"/>
    </ligand>
</feature>
<feature type="binding site" evidence="1">
    <location>
        <position position="337"/>
    </location>
    <ligand>
        <name>(2R)-2-phosphoglycerate</name>
        <dbReference type="ChEBI" id="CHEBI:58289"/>
    </ligand>
</feature>
<feature type="binding site" evidence="1">
    <location>
        <position position="366"/>
    </location>
    <ligand>
        <name>(2R)-2-phosphoglycerate</name>
        <dbReference type="ChEBI" id="CHEBI:58289"/>
    </ligand>
</feature>
<feature type="binding site" evidence="1">
    <location>
        <position position="367"/>
    </location>
    <ligand>
        <name>(2R)-2-phosphoglycerate</name>
        <dbReference type="ChEBI" id="CHEBI:58289"/>
    </ligand>
</feature>
<feature type="binding site" evidence="1">
    <location>
        <position position="388"/>
    </location>
    <ligand>
        <name>(2R)-2-phosphoglycerate</name>
        <dbReference type="ChEBI" id="CHEBI:58289"/>
    </ligand>
</feature>
<accession>Q0A7K4</accession>
<comment type="function">
    <text evidence="1">Catalyzes the reversible conversion of 2-phosphoglycerate (2-PG) into phosphoenolpyruvate (PEP). It is essential for the degradation of carbohydrates via glycolysis.</text>
</comment>
<comment type="catalytic activity">
    <reaction evidence="1">
        <text>(2R)-2-phosphoglycerate = phosphoenolpyruvate + H2O</text>
        <dbReference type="Rhea" id="RHEA:10164"/>
        <dbReference type="ChEBI" id="CHEBI:15377"/>
        <dbReference type="ChEBI" id="CHEBI:58289"/>
        <dbReference type="ChEBI" id="CHEBI:58702"/>
        <dbReference type="EC" id="4.2.1.11"/>
    </reaction>
</comment>
<comment type="cofactor">
    <cofactor evidence="1">
        <name>Mg(2+)</name>
        <dbReference type="ChEBI" id="CHEBI:18420"/>
    </cofactor>
    <text evidence="1">Binds a second Mg(2+) ion via substrate during catalysis.</text>
</comment>
<comment type="pathway">
    <text evidence="1">Carbohydrate degradation; glycolysis; pyruvate from D-glyceraldehyde 3-phosphate: step 4/5.</text>
</comment>
<comment type="subunit">
    <text evidence="1">Component of the RNA degradosome, a multiprotein complex involved in RNA processing and mRNA degradation.</text>
</comment>
<comment type="subcellular location">
    <subcellularLocation>
        <location evidence="1">Cytoplasm</location>
    </subcellularLocation>
    <subcellularLocation>
        <location evidence="1">Secreted</location>
    </subcellularLocation>
    <subcellularLocation>
        <location evidence="1">Cell surface</location>
    </subcellularLocation>
    <text evidence="1">Fractions of enolase are present in both the cytoplasm and on the cell surface.</text>
</comment>
<comment type="similarity">
    <text evidence="1">Belongs to the enolase family.</text>
</comment>
<gene>
    <name evidence="1" type="primary">eno</name>
    <name type="ordered locus">Mlg_1839</name>
</gene>